<protein>
    <recommendedName>
        <fullName>Collagen alpha-4(VI) chain</fullName>
    </recommendedName>
</protein>
<proteinExistence type="evidence at protein level"/>
<feature type="signal peptide" evidence="2">
    <location>
        <begin position="1"/>
        <end position="22"/>
    </location>
</feature>
<feature type="chain" id="PRO_5000214197" description="Collagen alpha-4(VI) chain">
    <location>
        <begin position="23"/>
        <end position="2309"/>
    </location>
</feature>
<feature type="domain" description="VWFA 1" evidence="3">
    <location>
        <begin position="34"/>
        <end position="206"/>
    </location>
</feature>
<feature type="domain" description="VWFA 2" evidence="3">
    <location>
        <begin position="235"/>
        <end position="413"/>
    </location>
</feature>
<feature type="domain" description="VWFA 3" evidence="3">
    <location>
        <begin position="430"/>
        <end position="653"/>
    </location>
</feature>
<feature type="domain" description="VWFA 4" evidence="3">
    <location>
        <begin position="634"/>
        <end position="811"/>
    </location>
</feature>
<feature type="domain" description="VWFA 5" evidence="3">
    <location>
        <begin position="849"/>
        <end position="1018"/>
    </location>
</feature>
<feature type="domain" description="VWFA 6" evidence="3">
    <location>
        <begin position="1030"/>
        <end position="1199"/>
    </location>
</feature>
<feature type="domain" description="VWFA 7" evidence="3">
    <location>
        <begin position="1776"/>
        <end position="1957"/>
    </location>
</feature>
<feature type="domain" description="VWFA 8" evidence="3">
    <location>
        <begin position="1982"/>
        <end position="2187"/>
    </location>
</feature>
<feature type="region of interest" description="Nonhelical region">
    <location>
        <begin position="21"/>
        <end position="1410"/>
    </location>
</feature>
<feature type="region of interest" description="Triple-helical region">
    <location>
        <begin position="1411"/>
        <end position="1744"/>
    </location>
</feature>
<feature type="region of interest" description="Disordered" evidence="4">
    <location>
        <begin position="1414"/>
        <end position="1746"/>
    </location>
</feature>
<feature type="region of interest" description="Nonhelical region">
    <location>
        <begin position="1745"/>
        <end position="2309"/>
    </location>
</feature>
<feature type="region of interest" description="Disordered" evidence="4">
    <location>
        <begin position="2262"/>
        <end position="2300"/>
    </location>
</feature>
<feature type="short sequence motif" description="Cell attachment site" evidence="2">
    <location>
        <begin position="1527"/>
        <end position="1529"/>
    </location>
</feature>
<feature type="short sequence motif" description="Cell attachment site" evidence="2">
    <location>
        <begin position="2208"/>
        <end position="2210"/>
    </location>
</feature>
<feature type="compositionally biased region" description="Basic and acidic residues" evidence="4">
    <location>
        <begin position="1414"/>
        <end position="1430"/>
    </location>
</feature>
<feature type="compositionally biased region" description="Gly residues" evidence="4">
    <location>
        <begin position="1480"/>
        <end position="1489"/>
    </location>
</feature>
<feature type="compositionally biased region" description="Low complexity" evidence="4">
    <location>
        <begin position="1605"/>
        <end position="1621"/>
    </location>
</feature>
<feature type="compositionally biased region" description="Low complexity" evidence="4">
    <location>
        <begin position="1650"/>
        <end position="1669"/>
    </location>
</feature>
<feature type="glycosylation site" description="N-linked (GlcNAc...) asparagine" evidence="2">
    <location>
        <position position="188"/>
    </location>
</feature>
<feature type="glycosylation site" description="N-linked (GlcNAc...) asparagine" evidence="2">
    <location>
        <position position="754"/>
    </location>
</feature>
<feature type="glycosylation site" description="N-linked (GlcNAc...) asparagine" evidence="2">
    <location>
        <position position="1114"/>
    </location>
</feature>
<feature type="sequence conflict" description="In Ref. 1; BAF95091." evidence="6" ref="1">
    <original>S</original>
    <variation>G</variation>
    <location>
        <position position="77"/>
    </location>
</feature>
<feature type="sequence conflict" description="In Ref. 1; BAF95091." evidence="6" ref="1">
    <original>T</original>
    <variation>A</variation>
    <location>
        <position position="147"/>
    </location>
</feature>
<feature type="sequence conflict" description="In Ref. 1; BAF95091." evidence="6" ref="1">
    <original>G</original>
    <variation>A</variation>
    <location>
        <position position="215"/>
    </location>
</feature>
<feature type="sequence conflict" description="In Ref. 1; BAF95091." evidence="6" ref="1">
    <original>R</original>
    <variation>Q</variation>
    <location>
        <position position="223"/>
    </location>
</feature>
<feature type="sequence conflict" description="In Ref. 1; BAF95091." evidence="6" ref="1">
    <original>S</original>
    <variation>L</variation>
    <location>
        <position position="263"/>
    </location>
</feature>
<feature type="sequence conflict" description="In Ref. 1; BAF95091." evidence="6" ref="1">
    <original>N</original>
    <variation>S</variation>
    <location>
        <position position="386"/>
    </location>
</feature>
<feature type="sequence conflict" description="In Ref. 1; BAF95091." evidence="6" ref="1">
    <original>T</original>
    <variation>N</variation>
    <location>
        <position position="425"/>
    </location>
</feature>
<feature type="sequence conflict" description="In Ref. 1; BAF95091." evidence="6" ref="1">
    <original>Q</original>
    <variation>P</variation>
    <location>
        <position position="443"/>
    </location>
</feature>
<feature type="sequence conflict" description="In Ref. 1; BAF95091." evidence="6" ref="1">
    <original>Q</original>
    <variation>R</variation>
    <location>
        <position position="468"/>
    </location>
</feature>
<feature type="sequence conflict" description="In Ref. 1; BAF95091." evidence="6" ref="1">
    <original>R</original>
    <variation>G</variation>
    <location>
        <position position="646"/>
    </location>
</feature>
<feature type="sequence conflict" description="In Ref. 1; BAF95091." evidence="6" ref="1">
    <original>R</original>
    <variation>S</variation>
    <location>
        <position position="699"/>
    </location>
</feature>
<feature type="sequence conflict" description="In Ref. 1; BAF95091." evidence="6" ref="1">
    <original>R</original>
    <variation>Q</variation>
    <location>
        <position position="707"/>
    </location>
</feature>
<feature type="sequence conflict" description="In Ref. 1; BAF95091." evidence="6" ref="1">
    <original>A</original>
    <variation>T</variation>
    <location>
        <position position="713"/>
    </location>
</feature>
<feature type="sequence conflict" description="In Ref. 1; BAF95091." evidence="6" ref="1">
    <original>I</original>
    <variation>M</variation>
    <location>
        <position position="747"/>
    </location>
</feature>
<feature type="sequence conflict" description="In Ref. 1; BAF95091." evidence="6" ref="1">
    <original>T</original>
    <variation>I</variation>
    <location>
        <position position="774"/>
    </location>
</feature>
<feature type="sequence conflict" description="In Ref. 1; BAF95091." evidence="6" ref="1">
    <original>G</original>
    <variation>R</variation>
    <location>
        <position position="822"/>
    </location>
</feature>
<feature type="sequence conflict" description="In Ref. 1; BAF95091." evidence="6" ref="1">
    <original>V</original>
    <variation>E</variation>
    <location>
        <position position="922"/>
    </location>
</feature>
<feature type="sequence conflict" description="In Ref. 1; BAF95091." evidence="6" ref="1">
    <original>I</original>
    <variation>V</variation>
    <location>
        <position position="945"/>
    </location>
</feature>
<feature type="sequence conflict" description="In Ref. 1; BAF95091." evidence="6" ref="1">
    <original>Q</original>
    <variation>R</variation>
    <location>
        <position position="1079"/>
    </location>
</feature>
<feature type="sequence conflict" description="In Ref. 1; BAF95091." evidence="6" ref="1">
    <original>DET</original>
    <variation>NEI</variation>
    <location>
        <begin position="1281"/>
        <end position="1283"/>
    </location>
</feature>
<feature type="sequence conflict" description="In Ref. 1; BAF95091." evidence="6" ref="1">
    <original>IG</original>
    <variation>VS</variation>
    <location>
        <begin position="1353"/>
        <end position="1354"/>
    </location>
</feature>
<feature type="sequence conflict" description="In Ref. 1; BAF95091." evidence="6" ref="1">
    <original>P</original>
    <variation>L</variation>
    <location>
        <position position="1434"/>
    </location>
</feature>
<feature type="sequence conflict" description="In Ref. 1; BAF95091." evidence="6" ref="1">
    <original>L</original>
    <variation>P</variation>
    <location>
        <position position="1629"/>
    </location>
</feature>
<feature type="sequence conflict" description="In Ref. 1; BAF95091." evidence="6" ref="1">
    <original>R</original>
    <variation>H</variation>
    <location>
        <position position="1703"/>
    </location>
</feature>
<feature type="sequence conflict" description="In Ref. 1; BAF95091." evidence="6" ref="1">
    <original>T</original>
    <variation>M</variation>
    <location>
        <position position="1775"/>
    </location>
</feature>
<feature type="sequence conflict" description="In Ref. 1; BAF95091." evidence="6" ref="1">
    <original>T</original>
    <variation>A</variation>
    <location>
        <position position="1780"/>
    </location>
</feature>
<feature type="sequence conflict" description="In Ref. 1; BAF95091." evidence="6" ref="1">
    <original>A</original>
    <variation>S</variation>
    <location>
        <position position="1788"/>
    </location>
</feature>
<feature type="sequence conflict" description="In Ref. 1; BAF95091." evidence="6" ref="1">
    <original>C</original>
    <variation>S</variation>
    <location>
        <position position="1809"/>
    </location>
</feature>
<feature type="sequence conflict" description="In Ref. 1; BAF95091." evidence="6" ref="1">
    <original>K</original>
    <variation>D</variation>
    <location>
        <position position="1978"/>
    </location>
</feature>
<feature type="sequence conflict" description="In Ref. 1; BAF95091." evidence="6" ref="1">
    <original>F</original>
    <variation>L</variation>
    <location>
        <position position="2222"/>
    </location>
</feature>
<evidence type="ECO:0000250" key="1"/>
<evidence type="ECO:0000255" key="2"/>
<evidence type="ECO:0000255" key="3">
    <source>
        <dbReference type="PROSITE-ProRule" id="PRU00219"/>
    </source>
</evidence>
<evidence type="ECO:0000256" key="4">
    <source>
        <dbReference type="SAM" id="MobiDB-lite"/>
    </source>
</evidence>
<evidence type="ECO:0000269" key="5">
    <source>
    </source>
</evidence>
<evidence type="ECO:0000305" key="6"/>
<accession>A2AX52</accession>
<accession>A2AX53</accession>
<accession>A2AX54</accession>
<accession>A9CR35</accession>
<sequence>MGTWKTFWLIISLAAGLGFVKSQRIVCREASVGDIVFLVHNSINPQHAHSVRNFLYILANSLQVGRDNIRVGLAQYSDTPTSEFLLSVYHRKGDVLKHIRGLQFKPGGNRMGQALQFILEHHFREGAGSRASQGVPQVAVVVSSGLTEDHIREPAEALRRAGILVYAIGVKDASQAELREISSSPKDNFTFFVPNFPGLPGLAQKLRPELCSTLGKAAQYTERESPACSEASPADIVFLVDSSTSIGLQNFQKVKHFLHSVVSGLDVRSDQVQVGLVQYSDNIYPAFPLKQSSLKSAVLDRIRNLPYSMGGTSTGSALEFIRANSLTEMSGSRAKDGVPQIVVLVTDGESSDEVQDVADQLKRDGVFVFVVGINIQDVQELQKIANEPFEEFLFTTENFSILQALSGTLLQALCSTVERQMKKSTKTYADVVFLIDTSQGTSQASFQWMQNFISRIIGILEVGQDKYQIGLAQYSDQGHTEFLFNTHKTRNEMVAHIHELLVFQGGSRKTGQGLRFLHRTFFQEAAGSRLLQGVPQYVVVITSGKSEDEVGEVAQILRKRGVDIVSVGLQDFDRAELEGIGPVVLVSDLQGEDRIRQLMLDVNMFIQGSPKPPRVMTDVAKDAVEECLVPVPADLVFLVEDFSSARQPNFQRVVHFLTTTVHSLNIHPDTTRVSLVFYSEKPRLEFSLDMYQSAAQVLRHLDRLTFRARRGRAKAGAALDFLRKEVFLPEKGSRPHRGVQQIAVVIIESPSLDNVSTPASYLRRAGVTIYAAGTQPASESKDLEKIVTYPPWKHAIRLESFLQLSVVGNKLKKKLCPEMLSGMPPLMSFIPESTRQSTQEGCESVEKADIYFLIDGSGSIKPNDFIEMKDFMKEVIKMFHIGPDRVRFGVVQYSDKIISQFFLTQYASMAGLSAAIDNIQQVGGGTTTGKALSKMVPVFQNTARIDVARYLIVITDGQSTDPVAEAAQGLRDIGVNIYAIGVRDANTTELEEIASKKMFFIYEFDSLKSIHQEVIRDICSSENCKSQKADIIFLIDGSESIAPKDFEKMKDFMERMVNQSNIGADEIQIGLLQFSSNPQEEFRLNRYSSKVDMCRAILSVQQMSDGTHTGKALNFTLPFFDSSRGGRPRVHQYLIVITDGVSQDNVAPPAKALRDRNIIIFAIGVGNVQRAQLLEITNDQDKVFQEENFESLQSLEKEILSEVCSSQGCNIDLSVGVDTSTSSERAQQELRRLLPELMQQLAFLSNISCEAPGQMEPRFRYVVPGSSDQPVFDSGFEKYSDETIQKFLVHQGSVNNRMDVDFLQSLGETAIHLSLAKVKVLLVFTDGLDEDLERLRRTSEFLRSRGLSGLLLIGLGGAHKLEELQELEFGRGFAYRQPLSSSLPSLPSVLLKQLDTIVERTCCNMYAKCYGDDGIRGEPGSRGEQGERGLDGLPGHPGEEGDHGQRGPRGLPGLRGEEGCPGVRGPKGARGFSGEKGNPGEEGVGGLDGEQGDRGAAGPSGEKGSSGSRGLTGLPGPAGPRGEPGLRGDPGDPGIDNLIQGPKGEKGRRGHQGSPGFHGPLGEAGSVGPRGSLGRHGLPGLKGVLGETGELGSRGEPGHPGPQGPRGRQGPPGFFGQKGDPGTQGNPGLPGPSGSKGPDGPRGLKGEVGPAGERGPRGQQGPRGQPGLFGPDGHGYPGRKGRKGEPGFPGYPGVQGEDGNPGRGGEKGAKGIRGKRGNSGFPGLAGTPGDQGPPGKMGTKGSKGLADRTPCEIVDFVRGNCPCSTGISRCPAFPTEVVFTLDMSNDVAPSDFERMRNILLSLLMKLEMCESNCPTGARVAIVSYNTRTDYLVRLSDHRGKAALLQAVRKIPLERSSGSRNLGATMRFVARHVFKRVRSGLLVRKVAVFFQAGRNYDTASVSTATLELHAADIATAVVTFTEEHNLPEAGLVDGPNEFHLFTWETEGQQDVERLASCTLCYDKCRPALGCQLRAPGPQKLDMDLVFLVDSSQGVSRDIYLGALRLVDSVLKDLEVAAQPGTSWHGARAALLTHTTPGFWPGVDQAPVLEYFHLTSHGHRTEMQRQIREAASGLLQGGPALGHALEWTLENVLLTAVLPRRSRVLYAIVASETSIWDREKLRTLSQEAKCKGIALFVLAVGPGVGAQELAELAKVASAPWEQHLLRLEGVSEAEVAYASRFTEAFLNLLNSGINQYPPPELVKECGGPNRGDTLLHFFTSAKRFSRSQSGTSAAFANDSEALKSQGIFLGERKSRVASVALQEALGSHGKDRADTEDIDQETPAKGRHLGPTHGPCPMGPEEGECLNYVLK</sequence>
<dbReference type="EMBL" id="AB370265">
    <property type="protein sequence ID" value="BAF95091.1"/>
    <property type="molecule type" value="mRNA"/>
</dbReference>
<dbReference type="EMBL" id="AM231151">
    <property type="protein sequence ID" value="CAJ77150.1"/>
    <property type="molecule type" value="mRNA"/>
</dbReference>
<dbReference type="EMBL" id="AM231152">
    <property type="protein sequence ID" value="CAJ77151.1"/>
    <property type="molecule type" value="mRNA"/>
</dbReference>
<dbReference type="EMBL" id="AM231153">
    <property type="protein sequence ID" value="CAJ77152.1"/>
    <property type="molecule type" value="mRNA"/>
</dbReference>
<dbReference type="EMBL" id="AC120386">
    <property type="status" value="NOT_ANNOTATED_CDS"/>
    <property type="molecule type" value="Genomic_DNA"/>
</dbReference>
<dbReference type="CCDS" id="CCDS52907.1"/>
<dbReference type="RefSeq" id="NP_081039.2">
    <property type="nucleotide sequence ID" value="NM_026763.3"/>
</dbReference>
<dbReference type="RefSeq" id="XP_036011120.1">
    <property type="nucleotide sequence ID" value="XM_036155227.1"/>
</dbReference>
<dbReference type="SMR" id="A2AX52"/>
<dbReference type="BioGRID" id="212923">
    <property type="interactions" value="2"/>
</dbReference>
<dbReference type="FunCoup" id="A2AX52">
    <property type="interactions" value="447"/>
</dbReference>
<dbReference type="STRING" id="10090.ENSMUSP00000112472"/>
<dbReference type="GlyCosmos" id="A2AX52">
    <property type="glycosylation" value="3 sites, No reported glycans"/>
</dbReference>
<dbReference type="GlyGen" id="A2AX52">
    <property type="glycosylation" value="4 sites"/>
</dbReference>
<dbReference type="iPTMnet" id="A2AX52"/>
<dbReference type="PhosphoSitePlus" id="A2AX52"/>
<dbReference type="jPOST" id="A2AX52"/>
<dbReference type="PaxDb" id="10090-ENSMUSP00000112472"/>
<dbReference type="ProteomicsDB" id="283668"/>
<dbReference type="DNASU" id="68553"/>
<dbReference type="Ensembl" id="ENSMUST00000121963.3">
    <property type="protein sequence ID" value="ENSMUSP00000112472.2"/>
    <property type="gene ID" value="ENSMUSG00000032572.10"/>
</dbReference>
<dbReference type="GeneID" id="68553"/>
<dbReference type="KEGG" id="mmu:68553"/>
<dbReference type="UCSC" id="uc012gzq.1">
    <property type="organism name" value="mouse"/>
</dbReference>
<dbReference type="AGR" id="MGI:1915803"/>
<dbReference type="CTD" id="68553"/>
<dbReference type="MGI" id="MGI:1915803">
    <property type="gene designation" value="Col6a4"/>
</dbReference>
<dbReference type="VEuPathDB" id="HostDB:ENSMUSG00000032572"/>
<dbReference type="eggNOG" id="KOG3544">
    <property type="taxonomic scope" value="Eukaryota"/>
</dbReference>
<dbReference type="GeneTree" id="ENSGT00940000163168"/>
<dbReference type="HOGENOM" id="CLU_000182_1_0_1"/>
<dbReference type="InParanoid" id="A2AX52"/>
<dbReference type="OMA" id="RTCCNMY"/>
<dbReference type="OrthoDB" id="6132182at2759"/>
<dbReference type="PhylomeDB" id="A2AX52"/>
<dbReference type="TreeFam" id="TF337483"/>
<dbReference type="BioGRID-ORCS" id="68553">
    <property type="hits" value="2 hits in 75 CRISPR screens"/>
</dbReference>
<dbReference type="PRO" id="PR:A2AX52"/>
<dbReference type="Proteomes" id="UP000000589">
    <property type="component" value="Chromosome 9"/>
</dbReference>
<dbReference type="RNAct" id="A2AX52">
    <property type="molecule type" value="protein"/>
</dbReference>
<dbReference type="Bgee" id="ENSMUSG00000032572">
    <property type="expression patterns" value="Expressed in uterine cervix and 76 other cell types or tissues"/>
</dbReference>
<dbReference type="ExpressionAtlas" id="A2AX52">
    <property type="expression patterns" value="baseline and differential"/>
</dbReference>
<dbReference type="GO" id="GO:0005589">
    <property type="term" value="C:collagen type VI trimer"/>
    <property type="evidence" value="ECO:0000304"/>
    <property type="project" value="GO_Central"/>
</dbReference>
<dbReference type="GO" id="GO:0062023">
    <property type="term" value="C:collagen-containing extracellular matrix"/>
    <property type="evidence" value="ECO:0007005"/>
    <property type="project" value="BHF-UCL"/>
</dbReference>
<dbReference type="GO" id="GO:0031012">
    <property type="term" value="C:extracellular matrix"/>
    <property type="evidence" value="ECO:0000314"/>
    <property type="project" value="MGI"/>
</dbReference>
<dbReference type="GO" id="GO:0005576">
    <property type="term" value="C:extracellular region"/>
    <property type="evidence" value="ECO:0000314"/>
    <property type="project" value="MGI"/>
</dbReference>
<dbReference type="GO" id="GO:0032991">
    <property type="term" value="C:protein-containing complex"/>
    <property type="evidence" value="ECO:0000314"/>
    <property type="project" value="MGI"/>
</dbReference>
<dbReference type="GO" id="GO:0005518">
    <property type="term" value="F:collagen binding"/>
    <property type="evidence" value="ECO:0000353"/>
    <property type="project" value="MGI"/>
</dbReference>
<dbReference type="GO" id="GO:0007155">
    <property type="term" value="P:cell adhesion"/>
    <property type="evidence" value="ECO:0007669"/>
    <property type="project" value="UniProtKB-KW"/>
</dbReference>
<dbReference type="GO" id="GO:0030198">
    <property type="term" value="P:extracellular matrix organization"/>
    <property type="evidence" value="ECO:0000314"/>
    <property type="project" value="MGI"/>
</dbReference>
<dbReference type="CDD" id="cd01472">
    <property type="entry name" value="vWA_collagen"/>
    <property type="match status" value="3"/>
</dbReference>
<dbReference type="CDD" id="cd01450">
    <property type="entry name" value="vWFA_subfamily_ECM"/>
    <property type="match status" value="3"/>
</dbReference>
<dbReference type="FunFam" id="3.40.50.410:FF:000004">
    <property type="entry name" value="collagen alpha-6(VI) chain"/>
    <property type="match status" value="4"/>
</dbReference>
<dbReference type="FunFam" id="3.40.50.410:FF:000003">
    <property type="entry name" value="Collagen type VI alpha 3 chain"/>
    <property type="match status" value="2"/>
</dbReference>
<dbReference type="FunFam" id="3.40.50.410:FF:000021">
    <property type="entry name" value="Collagen, type VI, alpha 3"/>
    <property type="match status" value="1"/>
</dbReference>
<dbReference type="Gene3D" id="3.40.50.410">
    <property type="entry name" value="von Willebrand factor, type A domain"/>
    <property type="match status" value="8"/>
</dbReference>
<dbReference type="InterPro" id="IPR008160">
    <property type="entry name" value="Collagen"/>
</dbReference>
<dbReference type="InterPro" id="IPR050525">
    <property type="entry name" value="ECM_Assembly_Org"/>
</dbReference>
<dbReference type="InterPro" id="IPR002035">
    <property type="entry name" value="VWF_A"/>
</dbReference>
<dbReference type="InterPro" id="IPR036465">
    <property type="entry name" value="vWFA_dom_sf"/>
</dbReference>
<dbReference type="PANTHER" id="PTHR24020">
    <property type="entry name" value="COLLAGEN ALPHA"/>
    <property type="match status" value="1"/>
</dbReference>
<dbReference type="PANTHER" id="PTHR24020:SF84">
    <property type="entry name" value="VWFA DOMAIN-CONTAINING PROTEIN"/>
    <property type="match status" value="1"/>
</dbReference>
<dbReference type="Pfam" id="PF01391">
    <property type="entry name" value="Collagen"/>
    <property type="match status" value="1"/>
</dbReference>
<dbReference type="Pfam" id="PF00092">
    <property type="entry name" value="VWA"/>
    <property type="match status" value="8"/>
</dbReference>
<dbReference type="PRINTS" id="PR00453">
    <property type="entry name" value="VWFADOMAIN"/>
</dbReference>
<dbReference type="SMART" id="SM00327">
    <property type="entry name" value="VWA"/>
    <property type="match status" value="9"/>
</dbReference>
<dbReference type="SUPFAM" id="SSF53300">
    <property type="entry name" value="vWA-like"/>
    <property type="match status" value="9"/>
</dbReference>
<dbReference type="PROSITE" id="PS50234">
    <property type="entry name" value="VWFA"/>
    <property type="match status" value="8"/>
</dbReference>
<comment type="function">
    <text evidence="1">Collagen VI acts as a cell-binding protein.</text>
</comment>
<comment type="subunit">
    <text evidence="5">Trimers composed of three different chains: alpha-1(VI), alpha-2(VI), and alpha-3(VI) or alpha-4(VI) or alpha-5(VI) or alpha-6(VI).</text>
</comment>
<comment type="subcellular location">
    <subcellularLocation>
        <location evidence="1">Secreted</location>
        <location evidence="1">Extracellular space</location>
        <location evidence="1">Extracellular matrix</location>
    </subcellularLocation>
</comment>
<comment type="tissue specificity">
    <text evidence="5">In newborn, it is expressed in lung, kidney, brain, intestine, skin, sternum and, at weak level, calvaria. In adult, it is almost absent with some weak expression in ovary and very weak expression in spleen, lung, uterus and brain.</text>
</comment>
<comment type="PTM">
    <text evidence="1">Prolines at the third position of the tripeptide repeating unit (G-X-Y) are hydroxylated in some or all of the chains.</text>
</comment>
<comment type="similarity">
    <text evidence="6">Belongs to the type VI collagen family.</text>
</comment>
<keyword id="KW-0130">Cell adhesion</keyword>
<keyword id="KW-0176">Collagen</keyword>
<keyword id="KW-0272">Extracellular matrix</keyword>
<keyword id="KW-0325">Glycoprotein</keyword>
<keyword id="KW-0379">Hydroxylation</keyword>
<keyword id="KW-1185">Reference proteome</keyword>
<keyword id="KW-0677">Repeat</keyword>
<keyword id="KW-0964">Secreted</keyword>
<keyword id="KW-0732">Signal</keyword>
<gene>
    <name type="primary">Col6a4</name>
    <name type="synonym">Dvwa</name>
</gene>
<reference key="1">
    <citation type="submission" date="2007-12" db="EMBL/GenBank/DDBJ databases">
        <title>Cloning and characterization of osteoarthritis-associated gene DVWA.</title>
        <authorList>
            <person name="Nakajima M."/>
            <person name="Miyamoto Y."/>
            <person name="Ikegawa S."/>
        </authorList>
    </citation>
    <scope>NUCLEOTIDE SEQUENCE [MRNA]</scope>
</reference>
<reference key="2">
    <citation type="journal article" date="2008" name="J. Biol. Chem.">
        <title>Three novel collagen VI chains with high homology to the alpha 3 chain.</title>
        <authorList>
            <person name="Gara S.K."/>
            <person name="Grumati P."/>
            <person name="Urciuolo A."/>
            <person name="Bonaldo P."/>
            <person name="Kobbe B."/>
            <person name="Koch M."/>
            <person name="Paulsson M."/>
            <person name="Wagener R."/>
        </authorList>
    </citation>
    <scope>NUCLEOTIDE SEQUENCE [MRNA]</scope>
    <scope>SUBUNIT</scope>
    <scope>TISSUE SPECIFICITY</scope>
    <source>
        <strain>C57BL/6J</strain>
        <tissue>Brain</tissue>
        <tissue>Uterus</tissue>
    </source>
</reference>
<reference key="3">
    <citation type="journal article" date="2009" name="PLoS Biol.">
        <title>Lineage-specific biology revealed by a finished genome assembly of the mouse.</title>
        <authorList>
            <person name="Church D.M."/>
            <person name="Goodstadt L."/>
            <person name="Hillier L.W."/>
            <person name="Zody M.C."/>
            <person name="Goldstein S."/>
            <person name="She X."/>
            <person name="Bult C.J."/>
            <person name="Agarwala R."/>
            <person name="Cherry J.L."/>
            <person name="DiCuccio M."/>
            <person name="Hlavina W."/>
            <person name="Kapustin Y."/>
            <person name="Meric P."/>
            <person name="Maglott D."/>
            <person name="Birtle Z."/>
            <person name="Marques A.C."/>
            <person name="Graves T."/>
            <person name="Zhou S."/>
            <person name="Teague B."/>
            <person name="Potamousis K."/>
            <person name="Churas C."/>
            <person name="Place M."/>
            <person name="Herschleb J."/>
            <person name="Runnheim R."/>
            <person name="Forrest D."/>
            <person name="Amos-Landgraf J."/>
            <person name="Schwartz D.C."/>
            <person name="Cheng Z."/>
            <person name="Lindblad-Toh K."/>
            <person name="Eichler E.E."/>
            <person name="Ponting C.P."/>
        </authorList>
    </citation>
    <scope>NUCLEOTIDE SEQUENCE [LARGE SCALE GENOMIC DNA]</scope>
    <source>
        <strain>C57BL/6J</strain>
    </source>
</reference>
<organism>
    <name type="scientific">Mus musculus</name>
    <name type="common">Mouse</name>
    <dbReference type="NCBI Taxonomy" id="10090"/>
    <lineage>
        <taxon>Eukaryota</taxon>
        <taxon>Metazoa</taxon>
        <taxon>Chordata</taxon>
        <taxon>Craniata</taxon>
        <taxon>Vertebrata</taxon>
        <taxon>Euteleostomi</taxon>
        <taxon>Mammalia</taxon>
        <taxon>Eutheria</taxon>
        <taxon>Euarchontoglires</taxon>
        <taxon>Glires</taxon>
        <taxon>Rodentia</taxon>
        <taxon>Myomorpha</taxon>
        <taxon>Muroidea</taxon>
        <taxon>Muridae</taxon>
        <taxon>Murinae</taxon>
        <taxon>Mus</taxon>
        <taxon>Mus</taxon>
    </lineage>
</organism>
<name>CO6A4_MOUSE</name>